<comment type="function">
    <text evidence="1">This protein is located at the 30S-50S ribosomal subunit interface and may play a role in the structure and function of the aminoacyl-tRNA binding site.</text>
</comment>
<comment type="similarity">
    <text evidence="1">Belongs to the bacterial ribosomal protein bL19 family.</text>
</comment>
<organism>
    <name type="scientific">Gloeobacter violaceus (strain ATCC 29082 / PCC 7421)</name>
    <dbReference type="NCBI Taxonomy" id="251221"/>
    <lineage>
        <taxon>Bacteria</taxon>
        <taxon>Bacillati</taxon>
        <taxon>Cyanobacteriota</taxon>
        <taxon>Cyanophyceae</taxon>
        <taxon>Gloeobacterales</taxon>
        <taxon>Gloeobacteraceae</taxon>
        <taxon>Gloeobacter</taxon>
    </lineage>
</organism>
<gene>
    <name evidence="1" type="primary">rplS</name>
    <name evidence="1" type="synonym">rpl19</name>
    <name type="ordered locus">glr0828</name>
</gene>
<feature type="chain" id="PRO_0000163460" description="Large ribosomal subunit protein bL19">
    <location>
        <begin position="1"/>
        <end position="121"/>
    </location>
</feature>
<accession>Q7NMD8</accession>
<protein>
    <recommendedName>
        <fullName evidence="1">Large ribosomal subunit protein bL19</fullName>
    </recommendedName>
    <alternativeName>
        <fullName evidence="2">50S ribosomal protein L19</fullName>
    </alternativeName>
</protein>
<reference key="1">
    <citation type="journal article" date="2003" name="DNA Res.">
        <title>Complete genome structure of Gloeobacter violaceus PCC 7421, a cyanobacterium that lacks thylakoids.</title>
        <authorList>
            <person name="Nakamura Y."/>
            <person name="Kaneko T."/>
            <person name="Sato S."/>
            <person name="Mimuro M."/>
            <person name="Miyashita H."/>
            <person name="Tsuchiya T."/>
            <person name="Sasamoto S."/>
            <person name="Watanabe A."/>
            <person name="Kawashima K."/>
            <person name="Kishida Y."/>
            <person name="Kiyokawa C."/>
            <person name="Kohara M."/>
            <person name="Matsumoto M."/>
            <person name="Matsuno A."/>
            <person name="Nakazaki N."/>
            <person name="Shimpo S."/>
            <person name="Takeuchi C."/>
            <person name="Yamada M."/>
            <person name="Tabata S."/>
        </authorList>
    </citation>
    <scope>NUCLEOTIDE SEQUENCE [LARGE SCALE GENOMIC DNA]</scope>
    <source>
        <strain>ATCC 29082 / PCC 7421</strain>
    </source>
</reference>
<name>RL19_GLOVI</name>
<keyword id="KW-1185">Reference proteome</keyword>
<keyword id="KW-0687">Ribonucleoprotein</keyword>
<keyword id="KW-0689">Ribosomal protein</keyword>
<proteinExistence type="inferred from homology"/>
<dbReference type="EMBL" id="BA000045">
    <property type="protein sequence ID" value="BAC88769.1"/>
    <property type="molecule type" value="Genomic_DNA"/>
</dbReference>
<dbReference type="RefSeq" id="NP_923774.1">
    <property type="nucleotide sequence ID" value="NC_005125.1"/>
</dbReference>
<dbReference type="RefSeq" id="WP_011140830.1">
    <property type="nucleotide sequence ID" value="NC_005125.1"/>
</dbReference>
<dbReference type="SMR" id="Q7NMD8"/>
<dbReference type="FunCoup" id="Q7NMD8">
    <property type="interactions" value="98"/>
</dbReference>
<dbReference type="STRING" id="251221.gene:10758305"/>
<dbReference type="EnsemblBacteria" id="BAC88769">
    <property type="protein sequence ID" value="BAC88769"/>
    <property type="gene ID" value="BAC88769"/>
</dbReference>
<dbReference type="KEGG" id="gvi:glr0828"/>
<dbReference type="PATRIC" id="fig|251221.4.peg.846"/>
<dbReference type="eggNOG" id="COG0335">
    <property type="taxonomic scope" value="Bacteria"/>
</dbReference>
<dbReference type="HOGENOM" id="CLU_103507_2_0_3"/>
<dbReference type="InParanoid" id="Q7NMD8"/>
<dbReference type="OrthoDB" id="9803541at2"/>
<dbReference type="PhylomeDB" id="Q7NMD8"/>
<dbReference type="Proteomes" id="UP000000557">
    <property type="component" value="Chromosome"/>
</dbReference>
<dbReference type="GO" id="GO:0022625">
    <property type="term" value="C:cytosolic large ribosomal subunit"/>
    <property type="evidence" value="ECO:0000318"/>
    <property type="project" value="GO_Central"/>
</dbReference>
<dbReference type="GO" id="GO:0003735">
    <property type="term" value="F:structural constituent of ribosome"/>
    <property type="evidence" value="ECO:0000318"/>
    <property type="project" value="GO_Central"/>
</dbReference>
<dbReference type="GO" id="GO:0006412">
    <property type="term" value="P:translation"/>
    <property type="evidence" value="ECO:0007669"/>
    <property type="project" value="UniProtKB-UniRule"/>
</dbReference>
<dbReference type="FunFam" id="2.30.30.790:FF:000001">
    <property type="entry name" value="50S ribosomal protein L19"/>
    <property type="match status" value="1"/>
</dbReference>
<dbReference type="Gene3D" id="2.30.30.790">
    <property type="match status" value="1"/>
</dbReference>
<dbReference type="HAMAP" id="MF_00402">
    <property type="entry name" value="Ribosomal_bL19"/>
    <property type="match status" value="1"/>
</dbReference>
<dbReference type="InterPro" id="IPR001857">
    <property type="entry name" value="Ribosomal_bL19"/>
</dbReference>
<dbReference type="InterPro" id="IPR018257">
    <property type="entry name" value="Ribosomal_bL19_CS"/>
</dbReference>
<dbReference type="InterPro" id="IPR038657">
    <property type="entry name" value="Ribosomal_bL19_sf"/>
</dbReference>
<dbReference type="InterPro" id="IPR008991">
    <property type="entry name" value="Translation_prot_SH3-like_sf"/>
</dbReference>
<dbReference type="NCBIfam" id="TIGR01024">
    <property type="entry name" value="rplS_bact"/>
    <property type="match status" value="1"/>
</dbReference>
<dbReference type="PANTHER" id="PTHR15680:SF9">
    <property type="entry name" value="LARGE RIBOSOMAL SUBUNIT PROTEIN BL19M"/>
    <property type="match status" value="1"/>
</dbReference>
<dbReference type="PANTHER" id="PTHR15680">
    <property type="entry name" value="RIBOSOMAL PROTEIN L19"/>
    <property type="match status" value="1"/>
</dbReference>
<dbReference type="Pfam" id="PF01245">
    <property type="entry name" value="Ribosomal_L19"/>
    <property type="match status" value="1"/>
</dbReference>
<dbReference type="PIRSF" id="PIRSF002191">
    <property type="entry name" value="Ribosomal_L19"/>
    <property type="match status" value="1"/>
</dbReference>
<dbReference type="PRINTS" id="PR00061">
    <property type="entry name" value="RIBOSOMALL19"/>
</dbReference>
<dbReference type="SUPFAM" id="SSF50104">
    <property type="entry name" value="Translation proteins SH3-like domain"/>
    <property type="match status" value="1"/>
</dbReference>
<dbReference type="PROSITE" id="PS01015">
    <property type="entry name" value="RIBOSOMAL_L19"/>
    <property type="match status" value="1"/>
</dbReference>
<evidence type="ECO:0000255" key="1">
    <source>
        <dbReference type="HAMAP-Rule" id="MF_00402"/>
    </source>
</evidence>
<evidence type="ECO:0000305" key="2"/>
<sequence length="121" mass="13869">MNAQEIIRSIEAEQMKTQLPVLHIGDTVKVNVRIREGGKERIQAFEGTIISMARAGINRTVTVRRIFQGIGVERVFLVHSPRIESMTVTRLGKVRRAKLYYLRDRIGKATRVKQKITRKAN</sequence>